<name>HIFA3_HAEIF</name>
<feature type="signal peptide" evidence="1">
    <location>
        <begin position="1"/>
        <end position="18"/>
    </location>
</feature>
<feature type="chain" id="PRO_0000009218" description="Major fimbrial subunit">
    <location>
        <begin position="19"/>
        <end position="212"/>
    </location>
</feature>
<feature type="disulfide bond" evidence="2">
    <location>
        <begin position="42"/>
        <end position="82"/>
    </location>
</feature>
<dbReference type="EMBL" id="U19730">
    <property type="protein sequence ID" value="AAA61814.1"/>
    <property type="molecule type" value="Genomic_DNA"/>
</dbReference>
<dbReference type="GO" id="GO:0009289">
    <property type="term" value="C:pilus"/>
    <property type="evidence" value="ECO:0007669"/>
    <property type="project" value="UniProtKB-SubCell"/>
</dbReference>
<dbReference type="GO" id="GO:0043709">
    <property type="term" value="P:cell adhesion involved in single-species biofilm formation"/>
    <property type="evidence" value="ECO:0007669"/>
    <property type="project" value="TreeGrafter"/>
</dbReference>
<dbReference type="Gene3D" id="2.60.40.1090">
    <property type="entry name" value="Fimbrial-type adhesion domain"/>
    <property type="match status" value="1"/>
</dbReference>
<dbReference type="InterPro" id="IPR000259">
    <property type="entry name" value="Adhesion_dom_fimbrial"/>
</dbReference>
<dbReference type="InterPro" id="IPR036937">
    <property type="entry name" value="Adhesion_dom_fimbrial_sf"/>
</dbReference>
<dbReference type="InterPro" id="IPR008966">
    <property type="entry name" value="Adhesion_dom_sf"/>
</dbReference>
<dbReference type="InterPro" id="IPR050263">
    <property type="entry name" value="Bact_Fimbrial_Adh_Pro"/>
</dbReference>
<dbReference type="PANTHER" id="PTHR33420:SF3">
    <property type="entry name" value="FIMBRIAL SUBUNIT ELFA"/>
    <property type="match status" value="1"/>
</dbReference>
<dbReference type="PANTHER" id="PTHR33420">
    <property type="entry name" value="FIMBRIAL SUBUNIT ELFA-RELATED"/>
    <property type="match status" value="1"/>
</dbReference>
<dbReference type="Pfam" id="PF00419">
    <property type="entry name" value="Fimbrial"/>
    <property type="match status" value="1"/>
</dbReference>
<dbReference type="SUPFAM" id="SSF49401">
    <property type="entry name" value="Bacterial adhesins"/>
    <property type="match status" value="1"/>
</dbReference>
<evidence type="ECO:0000255" key="1"/>
<evidence type="ECO:0000305" key="2"/>
<organism>
    <name type="scientific">Haemophilus influenzae</name>
    <dbReference type="NCBI Taxonomy" id="727"/>
    <lineage>
        <taxon>Bacteria</taxon>
        <taxon>Pseudomonadati</taxon>
        <taxon>Pseudomonadota</taxon>
        <taxon>Gammaproteobacteria</taxon>
        <taxon>Pasteurellales</taxon>
        <taxon>Pasteurellaceae</taxon>
        <taxon>Haemophilus</taxon>
    </lineage>
</organism>
<comment type="function">
    <text>Mediates adherence to oropharyngeal epithelial cells. Helps the airway colonization process.</text>
</comment>
<comment type="subcellular location">
    <subcellularLocation>
        <location>Fimbrium</location>
    </subcellularLocation>
</comment>
<comment type="similarity">
    <text evidence="2">Belongs to the fimbrial protein family.</text>
</comment>
<protein>
    <recommendedName>
        <fullName>Major fimbrial subunit</fullName>
    </recommendedName>
    <alternativeName>
        <fullName>Major pilin</fullName>
    </alternativeName>
</protein>
<keyword id="KW-1015">Disulfide bond</keyword>
<keyword id="KW-0281">Fimbrium</keyword>
<keyword id="KW-0732">Signal</keyword>
<sequence>MKKTLLGSLILLAFATNAADPQVSTETSGKVTFFGKVVENTCKVKTDSKNMSVVLNDVGKNHLKTKKDTAMPTPFTINLENCSTTTTTNNKPVATKVGAYFYSWKNADENNEYTLKNTKSGNDAAQNVNIQLFDANGTDAIEVVGNGTTDFTHSNTNDVATQQTVNKNHISGKATINGENNVKLHYIARYYATAQAEAGKVESSVDFQIAYE</sequence>
<reference key="1">
    <citation type="submission" date="1995-01" db="EMBL/GenBank/DDBJ databases">
        <authorList>
            <person name="Green B.A."/>
            <person name="Olmsted S.B."/>
        </authorList>
    </citation>
    <scope>NUCLEOTIDE SEQUENCE [GENOMIC DNA]</scope>
    <source>
        <strain>86-0295 / LKP serotype 1</strain>
    </source>
</reference>
<proteinExistence type="inferred from homology"/>
<accession>P45988</accession>
<gene>
    <name type="primary">hifA</name>
</gene>